<gene>
    <name type="primary">pyy</name>
</gene>
<comment type="function">
    <text>Gastrointestinal hormone and neuropeptide.</text>
</comment>
<comment type="subcellular location">
    <subcellularLocation>
        <location>Secreted</location>
    </subcellularLocation>
</comment>
<comment type="tissue specificity">
    <text>Gut and medial reticulospinal neuron system in the brainstem.</text>
</comment>
<comment type="similarity">
    <text evidence="2">Belongs to the NPY family.</text>
</comment>
<protein>
    <recommendedName>
        <fullName>Peptide YY-like</fullName>
        <shortName>PYY</shortName>
    </recommendedName>
</protein>
<keyword id="KW-0027">Amidation</keyword>
<keyword id="KW-0165">Cleavage on pair of basic residues</keyword>
<keyword id="KW-0372">Hormone</keyword>
<keyword id="KW-0527">Neuropeptide</keyword>
<keyword id="KW-0964">Secreted</keyword>
<keyword id="KW-0732">Signal</keyword>
<reference key="1">
    <citation type="journal article" date="1994" name="J. Neurosci. Res.">
        <title>Neuropeptide role of both peptide YY and neuropeptide Y in vertebrates suggested by abundant expression of their mRNAs in a cyclostome brain.</title>
        <authorList>
            <person name="Soederberg C."/>
            <person name="Pieribone V.A."/>
            <person name="Dahlstrand J."/>
            <person name="Brodin L."/>
            <person name="Larhammar D."/>
        </authorList>
    </citation>
    <scope>NUCLEOTIDE SEQUENCE [MRNA]</scope>
    <source>
        <tissue>Brain</tissue>
        <tissue>Spinal cord</tissue>
    </source>
</reference>
<sequence length="93" mass="10551">MVSPRVRLAALALSVCAILCLGMHASAFPPKPDNPGDNASPEQMARYKAAVRHYINLITRQRYGKRALTPENWIYRDPAEERVTYGLDDYAMW</sequence>
<feature type="signal peptide" evidence="1">
    <location>
        <begin position="1"/>
        <end position="27"/>
    </location>
</feature>
<feature type="peptide" id="PRO_0000025401" description="Peptide YY-like">
    <location>
        <begin position="28"/>
        <end position="63"/>
    </location>
</feature>
<feature type="propeptide" id="PRO_0000025402" description="C-terminal extension">
    <location>
        <begin position="65"/>
        <end position="93"/>
    </location>
</feature>
<feature type="modified residue" description="Tyrosine amide" evidence="1">
    <location>
        <position position="63"/>
    </location>
</feature>
<name>PYY_LAMFL</name>
<dbReference type="EMBL" id="L22868">
    <property type="protein sequence ID" value="AAA21353.1"/>
    <property type="molecule type" value="mRNA"/>
</dbReference>
<dbReference type="PIR" id="I50809">
    <property type="entry name" value="I50809"/>
</dbReference>
<dbReference type="GO" id="GO:0005615">
    <property type="term" value="C:extracellular space"/>
    <property type="evidence" value="ECO:0007669"/>
    <property type="project" value="TreeGrafter"/>
</dbReference>
<dbReference type="GO" id="GO:0005184">
    <property type="term" value="F:neuropeptide hormone activity"/>
    <property type="evidence" value="ECO:0007669"/>
    <property type="project" value="TreeGrafter"/>
</dbReference>
<dbReference type="GO" id="GO:0031841">
    <property type="term" value="F:neuropeptide Y receptor binding"/>
    <property type="evidence" value="ECO:0007669"/>
    <property type="project" value="TreeGrafter"/>
</dbReference>
<dbReference type="GO" id="GO:0007631">
    <property type="term" value="P:feeding behavior"/>
    <property type="evidence" value="ECO:0007669"/>
    <property type="project" value="TreeGrafter"/>
</dbReference>
<dbReference type="GO" id="GO:0007218">
    <property type="term" value="P:neuropeptide signaling pathway"/>
    <property type="evidence" value="ECO:0007669"/>
    <property type="project" value="UniProtKB-KW"/>
</dbReference>
<dbReference type="CDD" id="cd00126">
    <property type="entry name" value="PAH"/>
    <property type="match status" value="1"/>
</dbReference>
<dbReference type="Gene3D" id="6.10.250.900">
    <property type="match status" value="1"/>
</dbReference>
<dbReference type="InterPro" id="IPR001955">
    <property type="entry name" value="Pancreatic_hormone-like"/>
</dbReference>
<dbReference type="InterPro" id="IPR020392">
    <property type="entry name" value="Pancreatic_hormone-like_CS"/>
</dbReference>
<dbReference type="PANTHER" id="PTHR10533:SF12">
    <property type="match status" value="1"/>
</dbReference>
<dbReference type="PANTHER" id="PTHR10533">
    <property type="entry name" value="NEUROPEPTIDE Y/PANCREATIC HORMONE/PEPTIDE YY"/>
    <property type="match status" value="1"/>
</dbReference>
<dbReference type="Pfam" id="PF00159">
    <property type="entry name" value="Hormone_3"/>
    <property type="match status" value="1"/>
</dbReference>
<dbReference type="PRINTS" id="PR00278">
    <property type="entry name" value="PANCHORMONE"/>
</dbReference>
<dbReference type="SMART" id="SM00309">
    <property type="entry name" value="PAH"/>
    <property type="match status" value="1"/>
</dbReference>
<dbReference type="PROSITE" id="PS00265">
    <property type="entry name" value="PANCREATIC_HORMONE_1"/>
    <property type="match status" value="1"/>
</dbReference>
<dbReference type="PROSITE" id="PS50276">
    <property type="entry name" value="PANCREATIC_HORMONE_2"/>
    <property type="match status" value="1"/>
</dbReference>
<accession>P48098</accession>
<organism>
    <name type="scientific">Lampetra fluviatilis</name>
    <name type="common">European river lamprey</name>
    <name type="synonym">Petromyzon fluviatilis</name>
    <dbReference type="NCBI Taxonomy" id="7748"/>
    <lineage>
        <taxon>Eukaryota</taxon>
        <taxon>Metazoa</taxon>
        <taxon>Chordata</taxon>
        <taxon>Craniata</taxon>
        <taxon>Vertebrata</taxon>
        <taxon>Cyclostomata</taxon>
        <taxon>Hyperoartia</taxon>
        <taxon>Petromyzontiformes</taxon>
        <taxon>Petromyzontidae</taxon>
        <taxon>Lampetra</taxon>
    </lineage>
</organism>
<evidence type="ECO:0000255" key="1"/>
<evidence type="ECO:0000305" key="2"/>
<proteinExistence type="evidence at transcript level"/>